<keyword id="KW-0732">Signal</keyword>
<dbReference type="EMBL" id="CP000672">
    <property type="protein sequence ID" value="ABQ99474.1"/>
    <property type="molecule type" value="Genomic_DNA"/>
</dbReference>
<dbReference type="KEGG" id="hiq:CGSHiGG_02140"/>
<dbReference type="HOGENOM" id="CLU_073782_2_0_6"/>
<dbReference type="Proteomes" id="UP000001990">
    <property type="component" value="Chromosome"/>
</dbReference>
<dbReference type="HAMAP" id="MF_00789">
    <property type="entry name" value="UPF0319"/>
    <property type="match status" value="1"/>
</dbReference>
<dbReference type="InterPro" id="IPR018635">
    <property type="entry name" value="UPF0319"/>
</dbReference>
<dbReference type="NCBIfam" id="NF002516">
    <property type="entry name" value="PRK01904.1"/>
    <property type="match status" value="1"/>
</dbReference>
<dbReference type="PANTHER" id="PTHR38108">
    <property type="entry name" value="UPF0319 PROTEIN YCCT"/>
    <property type="match status" value="1"/>
</dbReference>
<dbReference type="PANTHER" id="PTHR38108:SF1">
    <property type="entry name" value="UPF0319 PROTEIN YCCT"/>
    <property type="match status" value="1"/>
</dbReference>
<dbReference type="Pfam" id="PF09829">
    <property type="entry name" value="DUF2057"/>
    <property type="match status" value="1"/>
</dbReference>
<evidence type="ECO:0000255" key="1">
    <source>
        <dbReference type="HAMAP-Rule" id="MF_00789"/>
    </source>
</evidence>
<feature type="signal peptide" evidence="1">
    <location>
        <begin position="1"/>
        <end position="21"/>
    </location>
</feature>
<feature type="chain" id="PRO_1000046903" description="UPF0319 protein CGSHiGG_02140">
    <location>
        <begin position="22"/>
        <end position="221"/>
    </location>
</feature>
<proteinExistence type="inferred from homology"/>
<sequence>MKLRAVVLGLATLCTSTATFAGMVSTSSNLEFLAIDGQKASKSLGKAKTFTVDDTQSHQVVVRLNEIVGSGSNQSLFESNPVIVTFQGNAEDLVISAPAIRNLDSGDKFNQMPNITVKTKSGNAISAKVDVLKQEGLFPSGNVLNDLAEYNASGAVASVSKFTATTSANSMVAAPAGNAKANKGKVVVQGENVAEQQLQYWFQQADKETQTRFLNWAKSHK</sequence>
<name>Y2140_HAEIG</name>
<protein>
    <recommendedName>
        <fullName evidence="1">UPF0319 protein CGSHiGG_02140</fullName>
    </recommendedName>
</protein>
<organism>
    <name type="scientific">Haemophilus influenzae (strain PittGG)</name>
    <dbReference type="NCBI Taxonomy" id="374931"/>
    <lineage>
        <taxon>Bacteria</taxon>
        <taxon>Pseudomonadati</taxon>
        <taxon>Pseudomonadota</taxon>
        <taxon>Gammaproteobacteria</taxon>
        <taxon>Pasteurellales</taxon>
        <taxon>Pasteurellaceae</taxon>
        <taxon>Haemophilus</taxon>
    </lineage>
</organism>
<reference key="1">
    <citation type="journal article" date="2007" name="Genome Biol.">
        <title>Characterization and modeling of the Haemophilus influenzae core and supragenomes based on the complete genomic sequences of Rd and 12 clinical nontypeable strains.</title>
        <authorList>
            <person name="Hogg J.S."/>
            <person name="Hu F.Z."/>
            <person name="Janto B."/>
            <person name="Boissy R."/>
            <person name="Hayes J."/>
            <person name="Keefe R."/>
            <person name="Post J.C."/>
            <person name="Ehrlich G.D."/>
        </authorList>
    </citation>
    <scope>NUCLEOTIDE SEQUENCE [LARGE SCALE GENOMIC DNA]</scope>
    <source>
        <strain>PittGG</strain>
    </source>
</reference>
<gene>
    <name type="ordered locus">CGSHiGG_02140</name>
</gene>
<accession>A5UFB9</accession>
<comment type="similarity">
    <text evidence="1">Belongs to the UPF0319 family.</text>
</comment>